<sequence length="137" mass="14701">MKETDIAGILTSTHTIALVGASDKPDRPSYRVMKYLLDQGYHVIPVSPKVAGKTLLGQKGYGTLADVPEKVDMVDVFRNSEAAWGVAQEAIAIGAKTLWMQLGVINEQAAVLARDAGLNVVMDRCPAIEIPRLGLAK</sequence>
<proteinExistence type="evidence at protein level"/>
<feature type="chain" id="PRO_0000201312" description="Uncharacterized protein YccU">
    <location>
        <begin position="1"/>
        <end position="137"/>
    </location>
</feature>
<protein>
    <recommendedName>
        <fullName>Uncharacterized protein YccU</fullName>
    </recommendedName>
</protein>
<dbReference type="EMBL" id="U00096">
    <property type="protein sequence ID" value="AAC74051.2"/>
    <property type="molecule type" value="Genomic_DNA"/>
</dbReference>
<dbReference type="EMBL" id="AP009048">
    <property type="protein sequence ID" value="BAA35730.2"/>
    <property type="molecule type" value="Genomic_DNA"/>
</dbReference>
<dbReference type="PIR" id="D64837">
    <property type="entry name" value="D64837"/>
</dbReference>
<dbReference type="RefSeq" id="NP_415485.4">
    <property type="nucleotide sequence ID" value="NC_000913.3"/>
</dbReference>
<dbReference type="RefSeq" id="WP_001301418.1">
    <property type="nucleotide sequence ID" value="NZ_SSZK01000002.1"/>
</dbReference>
<dbReference type="SMR" id="P75874"/>
<dbReference type="BioGRID" id="4260020">
    <property type="interactions" value="25"/>
</dbReference>
<dbReference type="DIP" id="DIP-28069N"/>
<dbReference type="FunCoup" id="P75874">
    <property type="interactions" value="197"/>
</dbReference>
<dbReference type="IntAct" id="P75874">
    <property type="interactions" value="1"/>
</dbReference>
<dbReference type="STRING" id="511145.b0965"/>
<dbReference type="jPOST" id="P75874"/>
<dbReference type="PaxDb" id="511145-b0965"/>
<dbReference type="EnsemblBacteria" id="AAC74051">
    <property type="protein sequence ID" value="AAC74051"/>
    <property type="gene ID" value="b0965"/>
</dbReference>
<dbReference type="GeneID" id="949008"/>
<dbReference type="KEGG" id="ecj:JW5130"/>
<dbReference type="KEGG" id="eco:b0965"/>
<dbReference type="KEGG" id="ecoc:C3026_05900"/>
<dbReference type="PATRIC" id="fig|1411691.4.peg.1308"/>
<dbReference type="EchoBASE" id="EB3487"/>
<dbReference type="eggNOG" id="COG1832">
    <property type="taxonomic scope" value="Bacteria"/>
</dbReference>
<dbReference type="HOGENOM" id="CLU_112567_0_0_6"/>
<dbReference type="InParanoid" id="P75874"/>
<dbReference type="OMA" id="MVMDRCP"/>
<dbReference type="OrthoDB" id="9804695at2"/>
<dbReference type="PhylomeDB" id="P75874"/>
<dbReference type="BioCyc" id="EcoCyc:G6499-MONOMER"/>
<dbReference type="PRO" id="PR:P75874"/>
<dbReference type="Proteomes" id="UP000000625">
    <property type="component" value="Chromosome"/>
</dbReference>
<dbReference type="GO" id="GO:0005737">
    <property type="term" value="C:cytoplasm"/>
    <property type="evidence" value="ECO:0000318"/>
    <property type="project" value="GO_Central"/>
</dbReference>
<dbReference type="GO" id="GO:0005829">
    <property type="term" value="C:cytosol"/>
    <property type="evidence" value="ECO:0000314"/>
    <property type="project" value="EcoCyc"/>
</dbReference>
<dbReference type="FunFam" id="3.40.50.720:FF:000076">
    <property type="entry name" value="CoA-binding domain protein"/>
    <property type="match status" value="1"/>
</dbReference>
<dbReference type="Gene3D" id="3.40.50.720">
    <property type="entry name" value="NAD(P)-binding Rossmann-like Domain"/>
    <property type="match status" value="1"/>
</dbReference>
<dbReference type="InterPro" id="IPR003781">
    <property type="entry name" value="CoA-bd"/>
</dbReference>
<dbReference type="InterPro" id="IPR036291">
    <property type="entry name" value="NAD(P)-bd_dom_sf"/>
</dbReference>
<dbReference type="PANTHER" id="PTHR33303:SF2">
    <property type="entry name" value="COA-BINDING DOMAIN-CONTAINING PROTEIN"/>
    <property type="match status" value="1"/>
</dbReference>
<dbReference type="PANTHER" id="PTHR33303">
    <property type="entry name" value="CYTOPLASMIC PROTEIN-RELATED"/>
    <property type="match status" value="1"/>
</dbReference>
<dbReference type="Pfam" id="PF13380">
    <property type="entry name" value="CoA_binding_2"/>
    <property type="match status" value="1"/>
</dbReference>
<dbReference type="SMART" id="SM00881">
    <property type="entry name" value="CoA_binding"/>
    <property type="match status" value="1"/>
</dbReference>
<dbReference type="SUPFAM" id="SSF51735">
    <property type="entry name" value="NAD(P)-binding Rossmann-fold domains"/>
    <property type="match status" value="1"/>
</dbReference>
<gene>
    <name type="primary">yccU</name>
    <name type="ordered locus">b0965</name>
    <name type="ordered locus">JW5130</name>
</gene>
<accession>P75874</accession>
<keyword id="KW-0903">Direct protein sequencing</keyword>
<keyword id="KW-1185">Reference proteome</keyword>
<reference key="1">
    <citation type="journal article" date="1996" name="DNA Res.">
        <title>A 718-kb DNA sequence of the Escherichia coli K-12 genome corresponding to the 12.7-28.0 min region on the linkage map.</title>
        <authorList>
            <person name="Oshima T."/>
            <person name="Aiba H."/>
            <person name="Baba T."/>
            <person name="Fujita K."/>
            <person name="Hayashi K."/>
            <person name="Honjo A."/>
            <person name="Ikemoto K."/>
            <person name="Inada T."/>
            <person name="Itoh T."/>
            <person name="Kajihara M."/>
            <person name="Kanai K."/>
            <person name="Kashimoto K."/>
            <person name="Kimura S."/>
            <person name="Kitagawa M."/>
            <person name="Makino K."/>
            <person name="Masuda S."/>
            <person name="Miki T."/>
            <person name="Mizobuchi K."/>
            <person name="Mori H."/>
            <person name="Motomura K."/>
            <person name="Nakamura Y."/>
            <person name="Nashimoto H."/>
            <person name="Nishio Y."/>
            <person name="Saito N."/>
            <person name="Sampei G."/>
            <person name="Seki Y."/>
            <person name="Tagami H."/>
            <person name="Takemoto K."/>
            <person name="Wada C."/>
            <person name="Yamamoto Y."/>
            <person name="Yano M."/>
            <person name="Horiuchi T."/>
        </authorList>
    </citation>
    <scope>NUCLEOTIDE SEQUENCE [LARGE SCALE GENOMIC DNA]</scope>
    <source>
        <strain>K12 / W3110 / ATCC 27325 / DSM 5911</strain>
    </source>
</reference>
<reference key="2">
    <citation type="journal article" date="1997" name="Science">
        <title>The complete genome sequence of Escherichia coli K-12.</title>
        <authorList>
            <person name="Blattner F.R."/>
            <person name="Plunkett G. III"/>
            <person name="Bloch C.A."/>
            <person name="Perna N.T."/>
            <person name="Burland V."/>
            <person name="Riley M."/>
            <person name="Collado-Vides J."/>
            <person name="Glasner J.D."/>
            <person name="Rode C.K."/>
            <person name="Mayhew G.F."/>
            <person name="Gregor J."/>
            <person name="Davis N.W."/>
            <person name="Kirkpatrick H.A."/>
            <person name="Goeden M.A."/>
            <person name="Rose D.J."/>
            <person name="Mau B."/>
            <person name="Shao Y."/>
        </authorList>
    </citation>
    <scope>NUCLEOTIDE SEQUENCE [LARGE SCALE GENOMIC DNA]</scope>
    <source>
        <strain>K12 / MG1655 / ATCC 47076</strain>
    </source>
</reference>
<reference key="3">
    <citation type="journal article" date="2006" name="Mol. Syst. Biol.">
        <title>Highly accurate genome sequences of Escherichia coli K-12 strains MG1655 and W3110.</title>
        <authorList>
            <person name="Hayashi K."/>
            <person name="Morooka N."/>
            <person name="Yamamoto Y."/>
            <person name="Fujita K."/>
            <person name="Isono K."/>
            <person name="Choi S."/>
            <person name="Ohtsubo E."/>
            <person name="Baba T."/>
            <person name="Wanner B.L."/>
            <person name="Mori H."/>
            <person name="Horiuchi T."/>
        </authorList>
    </citation>
    <scope>NUCLEOTIDE SEQUENCE [LARGE SCALE GENOMIC DNA]</scope>
    <source>
        <strain>K12 / W3110 / ATCC 27325 / DSM 5911</strain>
    </source>
</reference>
<reference key="4">
    <citation type="journal article" date="1998" name="FEMS Microbiol. Lett.">
        <title>Small genes/gene-products in Escherichia coli K-12.</title>
        <authorList>
            <person name="Wasinger V.C."/>
            <person name="Humphery-Smith I."/>
        </authorList>
    </citation>
    <scope>PROTEIN SEQUENCE OF 1-10</scope>
    <source>
        <strain>K12</strain>
    </source>
</reference>
<organism>
    <name type="scientific">Escherichia coli (strain K12)</name>
    <dbReference type="NCBI Taxonomy" id="83333"/>
    <lineage>
        <taxon>Bacteria</taxon>
        <taxon>Pseudomonadati</taxon>
        <taxon>Pseudomonadota</taxon>
        <taxon>Gammaproteobacteria</taxon>
        <taxon>Enterobacterales</taxon>
        <taxon>Enterobacteriaceae</taxon>
        <taxon>Escherichia</taxon>
    </lineage>
</organism>
<comment type="interaction">
    <interactant intactId="EBI-544472">
        <id>P75874</id>
    </interactant>
    <interactant intactId="EBI-543702">
        <id>P0A7K2</id>
        <label>rplL</label>
    </interactant>
    <organismsDiffer>false</organismsDiffer>
    <experiments>2</experiments>
</comment>
<name>YCCU_ECOLI</name>